<protein>
    <recommendedName>
        <fullName>Trehalose synthase complex regulatory subunit TPS3</fullName>
    </recommendedName>
    <alternativeName>
        <fullName>Alpha,alpha-trehalose-phosphate synthase [UDP-forming] 115 kDa subunit</fullName>
    </alternativeName>
</protein>
<feature type="chain" id="PRO_0000122510" description="Trehalose synthase complex regulatory subunit TPS3">
    <location>
        <begin position="1"/>
        <end position="1054"/>
    </location>
</feature>
<feature type="region of interest" description="Disordered" evidence="1">
    <location>
        <begin position="112"/>
        <end position="133"/>
    </location>
</feature>
<feature type="region of interest" description="Disordered" evidence="1">
    <location>
        <begin position="155"/>
        <end position="203"/>
    </location>
</feature>
<feature type="region of interest" description="Disordered" evidence="1">
    <location>
        <begin position="223"/>
        <end position="250"/>
    </location>
</feature>
<feature type="region of interest" description="Glycosyltransferase">
    <location>
        <begin position="287"/>
        <end position="778"/>
    </location>
</feature>
<feature type="compositionally biased region" description="Polar residues" evidence="1">
    <location>
        <begin position="122"/>
        <end position="132"/>
    </location>
</feature>
<feature type="compositionally biased region" description="Polar residues" evidence="1">
    <location>
        <begin position="170"/>
        <end position="182"/>
    </location>
</feature>
<feature type="compositionally biased region" description="Low complexity" evidence="1">
    <location>
        <begin position="235"/>
        <end position="249"/>
    </location>
</feature>
<feature type="modified residue" description="Phosphoserine" evidence="8 10">
    <location>
        <position position="148"/>
    </location>
</feature>
<feature type="modified residue" description="Phosphoserine" evidence="10">
    <location>
        <position position="150"/>
    </location>
</feature>
<feature type="modified residue" description="Phosphoserine" evidence="7 8">
    <location>
        <position position="181"/>
    </location>
</feature>
<feature type="modified residue" description="Phosphothreonine" evidence="10">
    <location>
        <position position="265"/>
    </location>
</feature>
<feature type="modified residue" description="Phosphoserine" evidence="10">
    <location>
        <position position="267"/>
    </location>
</feature>
<feature type="modified residue" description="Phosphoserine" evidence="9 10">
    <location>
        <position position="273"/>
    </location>
</feature>
<feature type="modified residue" description="Phosphoserine" evidence="8">
    <location>
        <position position="960"/>
    </location>
</feature>
<feature type="sequence conflict" description="In Ref. 1; AAA35224." evidence="6" ref="1">
    <original>P</original>
    <variation>L</variation>
    <location>
        <position position="186"/>
    </location>
</feature>
<feature type="sequence conflict" description="In Ref. 1; AAA35224." evidence="6" ref="1">
    <original>N</original>
    <variation>D</variation>
    <location>
        <position position="765"/>
    </location>
</feature>
<feature type="sequence conflict" description="In Ref. 1; AAA35224." evidence="6" ref="1">
    <original>S</original>
    <variation>G</variation>
    <location>
        <position position="834"/>
    </location>
</feature>
<feature type="sequence conflict" description="In Ref. 1; AAA35224." evidence="6" ref="1">
    <original>D</original>
    <variation>E</variation>
    <location>
        <position position="902"/>
    </location>
</feature>
<gene>
    <name type="primary">TPS3</name>
    <name type="ordered locus">YMR261C</name>
    <name type="ORF">YM8156.03C</name>
</gene>
<organism>
    <name type="scientific">Saccharomyces cerevisiae (strain ATCC 204508 / S288c)</name>
    <name type="common">Baker's yeast</name>
    <dbReference type="NCBI Taxonomy" id="559292"/>
    <lineage>
        <taxon>Eukaryota</taxon>
        <taxon>Fungi</taxon>
        <taxon>Dikarya</taxon>
        <taxon>Ascomycota</taxon>
        <taxon>Saccharomycotina</taxon>
        <taxon>Saccharomycetes</taxon>
        <taxon>Saccharomycetales</taxon>
        <taxon>Saccharomycetaceae</taxon>
        <taxon>Saccharomyces</taxon>
    </lineage>
</organism>
<reference key="1">
    <citation type="submission" date="1992-06" db="EMBL/GenBank/DDBJ databases">
        <title>A large open reading frame in the yeast genome containing homology to the cif1 gene.</title>
        <authorList>
            <person name="Manning A.M."/>
            <person name="Rosenbloom C.L."/>
            <person name="Beaudet A.L."/>
        </authorList>
    </citation>
    <scope>NUCLEOTIDE SEQUENCE [GENOMIC DNA]</scope>
</reference>
<reference key="2">
    <citation type="journal article" date="1997" name="Nature">
        <title>The nucleotide sequence of Saccharomyces cerevisiae chromosome XIII.</title>
        <authorList>
            <person name="Bowman S."/>
            <person name="Churcher C.M."/>
            <person name="Badcock K."/>
            <person name="Brown D."/>
            <person name="Chillingworth T."/>
            <person name="Connor R."/>
            <person name="Dedman K."/>
            <person name="Devlin K."/>
            <person name="Gentles S."/>
            <person name="Hamlin N."/>
            <person name="Hunt S."/>
            <person name="Jagels K."/>
            <person name="Lye G."/>
            <person name="Moule S."/>
            <person name="Odell C."/>
            <person name="Pearson D."/>
            <person name="Rajandream M.A."/>
            <person name="Rice P."/>
            <person name="Skelton J."/>
            <person name="Walsh S.V."/>
            <person name="Whitehead S."/>
            <person name="Barrell B.G."/>
        </authorList>
    </citation>
    <scope>NUCLEOTIDE SEQUENCE [LARGE SCALE GENOMIC DNA]</scope>
    <source>
        <strain>ATCC 204508 / S288c</strain>
    </source>
</reference>
<reference key="3">
    <citation type="journal article" date="2014" name="G3 (Bethesda)">
        <title>The reference genome sequence of Saccharomyces cerevisiae: Then and now.</title>
        <authorList>
            <person name="Engel S.R."/>
            <person name="Dietrich F.S."/>
            <person name="Fisk D.G."/>
            <person name="Binkley G."/>
            <person name="Balakrishnan R."/>
            <person name="Costanzo M.C."/>
            <person name="Dwight S.S."/>
            <person name="Hitz B.C."/>
            <person name="Karra K."/>
            <person name="Nash R.S."/>
            <person name="Weng S."/>
            <person name="Wong E.D."/>
            <person name="Lloyd P."/>
            <person name="Skrzypek M.S."/>
            <person name="Miyasato S.R."/>
            <person name="Simison M."/>
            <person name="Cherry J.M."/>
        </authorList>
    </citation>
    <scope>GENOME REANNOTATION</scope>
    <source>
        <strain>ATCC 204508 / S288c</strain>
    </source>
</reference>
<reference key="4">
    <citation type="journal article" date="2007" name="Genome Res.">
        <title>Approaching a complete repository of sequence-verified protein-encoding clones for Saccharomyces cerevisiae.</title>
        <authorList>
            <person name="Hu Y."/>
            <person name="Rolfs A."/>
            <person name="Bhullar B."/>
            <person name="Murthy T.V.S."/>
            <person name="Zhu C."/>
            <person name="Berger M.F."/>
            <person name="Camargo A.A."/>
            <person name="Kelley F."/>
            <person name="McCarron S."/>
            <person name="Jepson D."/>
            <person name="Richardson A."/>
            <person name="Raphael J."/>
            <person name="Moreira D."/>
            <person name="Taycher E."/>
            <person name="Zuo D."/>
            <person name="Mohr S."/>
            <person name="Kane M.F."/>
            <person name="Williamson J."/>
            <person name="Simpson A.J.G."/>
            <person name="Bulyk M.L."/>
            <person name="Harlow E."/>
            <person name="Marsischky G."/>
            <person name="Kolodner R.D."/>
            <person name="LaBaer J."/>
        </authorList>
    </citation>
    <scope>NUCLEOTIDE SEQUENCE [GENOMIC DNA]</scope>
    <source>
        <strain>ATCC 204508 / S288c</strain>
    </source>
</reference>
<reference key="5">
    <citation type="journal article" date="1997" name="Mol. Microbiol.">
        <title>Structural analysis of the subunits of the trehalose-6-phosphate synthase/phosphatase complex in Saccharomyces cerevisiae and their function during heat shock.</title>
        <authorList>
            <person name="Reinders A."/>
            <person name="Buerckert N."/>
            <person name="Hohmann S."/>
            <person name="Thevelein J.M."/>
            <person name="Boller T."/>
            <person name="Wiemken A."/>
            <person name="De Virgilio C."/>
        </authorList>
    </citation>
    <scope>FUNCTION</scope>
    <scope>INTERACTION WITH TPS1 AND TPS2</scope>
</reference>
<reference key="6">
    <citation type="journal article" date="1998" name="J. Biol. Chem.">
        <title>Composition and functional analysis of the Saccharomyces cerevisiae trehalose synthase complex.</title>
        <authorList>
            <person name="Bell W."/>
            <person name="Sun W."/>
            <person name="Hohmann S."/>
            <person name="Wera S."/>
            <person name="Reinders A."/>
            <person name="De Virgilio C."/>
            <person name="Wiemken A."/>
            <person name="Thevelein J.M."/>
        </authorList>
    </citation>
    <scope>SUBUNIT</scope>
</reference>
<reference key="7">
    <citation type="journal article" date="2003" name="Nature">
        <title>Global analysis of protein localization in budding yeast.</title>
        <authorList>
            <person name="Huh W.-K."/>
            <person name="Falvo J.V."/>
            <person name="Gerke L.C."/>
            <person name="Carroll A.S."/>
            <person name="Howson R.W."/>
            <person name="Weissman J.S."/>
            <person name="O'Shea E.K."/>
        </authorList>
    </citation>
    <scope>SUBCELLULAR LOCATION [LARGE SCALE ANALYSIS]</scope>
</reference>
<reference key="8">
    <citation type="journal article" date="2003" name="Nature">
        <title>Global analysis of protein expression in yeast.</title>
        <authorList>
            <person name="Ghaemmaghami S."/>
            <person name="Huh W.-K."/>
            <person name="Bower K."/>
            <person name="Howson R.W."/>
            <person name="Belle A."/>
            <person name="Dephoure N."/>
            <person name="O'Shea E.K."/>
            <person name="Weissman J.S."/>
        </authorList>
    </citation>
    <scope>LEVEL OF PROTEIN EXPRESSION [LARGE SCALE ANALYSIS]</scope>
</reference>
<reference key="9">
    <citation type="journal article" date="2007" name="J. Proteome Res.">
        <title>Large-scale phosphorylation analysis of alpha-factor-arrested Saccharomyces cerevisiae.</title>
        <authorList>
            <person name="Li X."/>
            <person name="Gerber S.A."/>
            <person name="Rudner A.D."/>
            <person name="Beausoleil S.A."/>
            <person name="Haas W."/>
            <person name="Villen J."/>
            <person name="Elias J.E."/>
            <person name="Gygi S.P."/>
        </authorList>
    </citation>
    <scope>PHOSPHORYLATION [LARGE SCALE ANALYSIS] AT SER-148; SER-181 AND SER-960</scope>
    <scope>IDENTIFICATION BY MASS SPECTROMETRY [LARGE SCALE ANALYSIS]</scope>
    <source>
        <strain>ADR376</strain>
    </source>
</reference>
<reference key="10">
    <citation type="journal article" date="2007" name="Proc. Natl. Acad. Sci. U.S.A.">
        <title>Analysis of phosphorylation sites on proteins from Saccharomyces cerevisiae by electron transfer dissociation (ETD) mass spectrometry.</title>
        <authorList>
            <person name="Chi A."/>
            <person name="Huttenhower C."/>
            <person name="Geer L.Y."/>
            <person name="Coon J.J."/>
            <person name="Syka J.E.P."/>
            <person name="Bai D.L."/>
            <person name="Shabanowitz J."/>
            <person name="Burke D.J."/>
            <person name="Troyanskaya O.G."/>
            <person name="Hunt D.F."/>
        </authorList>
    </citation>
    <scope>PHOSPHORYLATION [LARGE SCALE ANALYSIS] AT SER-181</scope>
    <scope>IDENTIFICATION BY MASS SPECTROMETRY [LARGE SCALE ANALYSIS]</scope>
</reference>
<reference key="11">
    <citation type="journal article" date="2008" name="Mol. Cell. Proteomics">
        <title>A multidimensional chromatography technology for in-depth phosphoproteome analysis.</title>
        <authorList>
            <person name="Albuquerque C.P."/>
            <person name="Smolka M.B."/>
            <person name="Payne S.H."/>
            <person name="Bafna V."/>
            <person name="Eng J."/>
            <person name="Zhou H."/>
        </authorList>
    </citation>
    <scope>PHOSPHORYLATION [LARGE SCALE ANALYSIS] AT SER-273</scope>
    <scope>IDENTIFICATION BY MASS SPECTROMETRY [LARGE SCALE ANALYSIS]</scope>
</reference>
<reference key="12">
    <citation type="journal article" date="2009" name="Science">
        <title>Global analysis of Cdk1 substrate phosphorylation sites provides insights into evolution.</title>
        <authorList>
            <person name="Holt L.J."/>
            <person name="Tuch B.B."/>
            <person name="Villen J."/>
            <person name="Johnson A.D."/>
            <person name="Gygi S.P."/>
            <person name="Morgan D.O."/>
        </authorList>
    </citation>
    <scope>PHOSPHORYLATION [LARGE SCALE ANALYSIS] AT SER-148; SER-150; THR-265; SER-267 AND SER-273</scope>
    <scope>IDENTIFICATION BY MASS SPECTROMETRY [LARGE SCALE ANALYSIS]</scope>
</reference>
<evidence type="ECO:0000256" key="1">
    <source>
        <dbReference type="SAM" id="MobiDB-lite"/>
    </source>
</evidence>
<evidence type="ECO:0000269" key="2">
    <source>
    </source>
</evidence>
<evidence type="ECO:0000269" key="3">
    <source>
    </source>
</evidence>
<evidence type="ECO:0000269" key="4">
    <source>
    </source>
</evidence>
<evidence type="ECO:0000269" key="5">
    <source>
    </source>
</evidence>
<evidence type="ECO:0000305" key="6"/>
<evidence type="ECO:0007744" key="7">
    <source>
    </source>
</evidence>
<evidence type="ECO:0007744" key="8">
    <source>
    </source>
</evidence>
<evidence type="ECO:0007744" key="9">
    <source>
    </source>
</evidence>
<evidence type="ECO:0007744" key="10">
    <source>
    </source>
</evidence>
<accession>P38426</accession>
<accession>D6W087</accession>
<accession>Q6B1W2</accession>
<name>TPS3_YEAST</name>
<keyword id="KW-0963">Cytoplasm</keyword>
<keyword id="KW-0597">Phosphoprotein</keyword>
<keyword id="KW-1185">Reference proteome</keyword>
<dbReference type="EMBL" id="M88172">
    <property type="protein sequence ID" value="AAA35224.1"/>
    <property type="molecule type" value="Genomic_DNA"/>
</dbReference>
<dbReference type="EMBL" id="Z49260">
    <property type="protein sequence ID" value="CAA89244.1"/>
    <property type="molecule type" value="Genomic_DNA"/>
</dbReference>
<dbReference type="EMBL" id="AY692968">
    <property type="protein sequence ID" value="AAT92987.1"/>
    <property type="molecule type" value="Genomic_DNA"/>
</dbReference>
<dbReference type="EMBL" id="BK006946">
    <property type="protein sequence ID" value="DAA10161.1"/>
    <property type="molecule type" value="Genomic_DNA"/>
</dbReference>
<dbReference type="RefSeq" id="NP_013988.1">
    <property type="nucleotide sequence ID" value="NM_001182768.1"/>
</dbReference>
<dbReference type="SMR" id="P38426"/>
<dbReference type="BioGRID" id="35439">
    <property type="interactions" value="105"/>
</dbReference>
<dbReference type="ComplexPortal" id="CPX-582">
    <property type="entry name" value="Trehalose-6-phosphate synthase/phosphatase complex, tps3 variant"/>
</dbReference>
<dbReference type="DIP" id="DIP-891N"/>
<dbReference type="FunCoup" id="P38426">
    <property type="interactions" value="172"/>
</dbReference>
<dbReference type="IntAct" id="P38426">
    <property type="interactions" value="18"/>
</dbReference>
<dbReference type="MINT" id="P38426"/>
<dbReference type="STRING" id="4932.YMR261C"/>
<dbReference type="CAZy" id="GT20">
    <property type="family name" value="Glycosyltransferase Family 20"/>
</dbReference>
<dbReference type="GlyGen" id="P38426">
    <property type="glycosylation" value="5 sites, 1 O-linked glycan (5 sites)"/>
</dbReference>
<dbReference type="iPTMnet" id="P38426"/>
<dbReference type="PaxDb" id="4932-YMR261C"/>
<dbReference type="PeptideAtlas" id="P38426"/>
<dbReference type="EnsemblFungi" id="YMR261C_mRNA">
    <property type="protein sequence ID" value="YMR261C"/>
    <property type="gene ID" value="YMR261C"/>
</dbReference>
<dbReference type="GeneID" id="855303"/>
<dbReference type="KEGG" id="sce:YMR261C"/>
<dbReference type="AGR" id="SGD:S000004874"/>
<dbReference type="SGD" id="S000004874">
    <property type="gene designation" value="TPS3"/>
</dbReference>
<dbReference type="VEuPathDB" id="FungiDB:YMR261C"/>
<dbReference type="eggNOG" id="KOG1050">
    <property type="taxonomic scope" value="Eukaryota"/>
</dbReference>
<dbReference type="GeneTree" id="ENSGT00940000167933"/>
<dbReference type="HOGENOM" id="CLU_002351_2_0_1"/>
<dbReference type="InParanoid" id="P38426"/>
<dbReference type="OMA" id="FEGHYKS"/>
<dbReference type="OrthoDB" id="755951at2759"/>
<dbReference type="BioCyc" id="MetaCyc:MONOMER3O-4030"/>
<dbReference type="BioCyc" id="YEAST:MONOMER3O-4030"/>
<dbReference type="BioGRID-ORCS" id="855303">
    <property type="hits" value="1 hit in 10 CRISPR screens"/>
</dbReference>
<dbReference type="PRO" id="PR:P38426"/>
<dbReference type="Proteomes" id="UP000002311">
    <property type="component" value="Chromosome XIII"/>
</dbReference>
<dbReference type="RNAct" id="P38426">
    <property type="molecule type" value="protein"/>
</dbReference>
<dbReference type="GO" id="GO:0005946">
    <property type="term" value="C:alpha,alpha-trehalose-phosphate synthase complex (UDP-forming)"/>
    <property type="evidence" value="ECO:0000353"/>
    <property type="project" value="SGD"/>
</dbReference>
<dbReference type="GO" id="GO:0005737">
    <property type="term" value="C:cytoplasm"/>
    <property type="evidence" value="ECO:0007005"/>
    <property type="project" value="SGD"/>
</dbReference>
<dbReference type="GO" id="GO:0003824">
    <property type="term" value="F:catalytic activity"/>
    <property type="evidence" value="ECO:0007669"/>
    <property type="project" value="InterPro"/>
</dbReference>
<dbReference type="GO" id="GO:0030234">
    <property type="term" value="F:enzyme regulator activity"/>
    <property type="evidence" value="ECO:0000315"/>
    <property type="project" value="SGD"/>
</dbReference>
<dbReference type="GO" id="GO:0042802">
    <property type="term" value="F:identical protein binding"/>
    <property type="evidence" value="ECO:0000353"/>
    <property type="project" value="IntAct"/>
</dbReference>
<dbReference type="GO" id="GO:0005992">
    <property type="term" value="P:trehalose biosynthetic process"/>
    <property type="evidence" value="ECO:0000315"/>
    <property type="project" value="SGD"/>
</dbReference>
<dbReference type="CDD" id="cd03788">
    <property type="entry name" value="GT20_TPS"/>
    <property type="match status" value="1"/>
</dbReference>
<dbReference type="FunFam" id="3.40.50.2000:FF:000099">
    <property type="entry name" value="Alpha,alpha-trehalose phosphate synthase subunit, putative"/>
    <property type="match status" value="1"/>
</dbReference>
<dbReference type="FunFam" id="3.40.50.2000:FF:000036">
    <property type="entry name" value="Alpha,alpha-trehalose-phosphate synthase subunit Tps2"/>
    <property type="match status" value="1"/>
</dbReference>
<dbReference type="Gene3D" id="3.40.50.2000">
    <property type="entry name" value="Glycogen Phosphorylase B"/>
    <property type="match status" value="2"/>
</dbReference>
<dbReference type="InterPro" id="IPR001830">
    <property type="entry name" value="Glyco_trans_20"/>
</dbReference>
<dbReference type="InterPro" id="IPR036412">
    <property type="entry name" value="HAD-like_sf"/>
</dbReference>
<dbReference type="InterPro" id="IPR003337">
    <property type="entry name" value="Trehalose_PPase"/>
</dbReference>
<dbReference type="PANTHER" id="PTHR10788:SF15">
    <property type="entry name" value="TREHALOSE SYNTHASE COMPLEX REGULATORY SUBUNIT TPS3-RELATED"/>
    <property type="match status" value="1"/>
</dbReference>
<dbReference type="PANTHER" id="PTHR10788">
    <property type="entry name" value="TREHALOSE-6-PHOSPHATE SYNTHASE"/>
    <property type="match status" value="1"/>
</dbReference>
<dbReference type="Pfam" id="PF00982">
    <property type="entry name" value="Glyco_transf_20"/>
    <property type="match status" value="1"/>
</dbReference>
<dbReference type="Pfam" id="PF02358">
    <property type="entry name" value="Trehalose_PPase"/>
    <property type="match status" value="1"/>
</dbReference>
<dbReference type="SUPFAM" id="SSF56784">
    <property type="entry name" value="HAD-like"/>
    <property type="match status" value="1"/>
</dbReference>
<dbReference type="SUPFAM" id="SSF53756">
    <property type="entry name" value="UDP-Glycosyltransferase/glycogen phosphorylase"/>
    <property type="match status" value="1"/>
</dbReference>
<proteinExistence type="evidence at protein level"/>
<sequence length="1054" mass="118835">MTIIVASLFLPYTPQFEADVTNSDTAKLVESSMIKVDCNNQELSNNKQERSSSVTSASSHYIGLPQEAQINGEPLQRANVGSPATGVNYHNEMEMLSSEQFLEELTANATHAANSGIPPANNPVSSGSTAQRPSVEEFFSAPSARVCSPSQEASASSISASRSSAHHNDLSSSLMKNPNLSFDSHPPRVRSSSKSAVITPVSKSVPDVDPAVVDVAKVREEFQQQASLPSMKRVSGSTAGDSSIASSSSNLRYSQQFQDNFIEDTDSEDDIDSDLETDATKKYNVPKFGGYSNNAKLRASLMRNSYELFKHLPWTIVDSDKGNGSLKNAVNIAVAEKTVKEPVSWVGTMGIPTDELPHEVCHKISKKLEQDFSSFPVVTDDITFKGAYKNYAKQILWPTLHYQIPDNPNSKAFEDHSWDYYQKVNQKFSDRIVSVYKPGDTIWIHDYHLMLVPQMVREKLPKAKIGFFLHVSFPSSEVFRCLANRERILEGIIGANFVGFQTKEYKRHFLQTCNRLLAADVSNDEVKYHCNIVSVMYAPIGIDYYHLTSQLRNGSVLEWRQLIKERWRNKKLIVCRDQFDRIRGLQKKMLAYERFLIENPEYIEKVVLIQICIGKSSDPEYERQIMVVVDRINSLSSNISISQPVVFLHQDLDFAQYLALNCEADVFLVDALREGMNLTCHEFIVSSFEKNAPLLLSEFTGSSSVLKEGAILINPWDINHVAQSIKRSLEMSPEEKRRRWKKLFKSVIEHDSDNWITKCFEYINNAWESNQETSTVFNLAPEKFCADYKASKKHLFIFKISEPPTSRMLSLLSELSSNNIVYVLSSFTKNTFESLYNGVLNIGLIAENGAYVRVNGSWYNIVEELDWMKEVAKIFDEKVERLPGSYYKIADSMIRFHTENADDQDRVPTVIGEAITHINTLFDDRDIHAYVHKDIVFVQQTGLALAAAEFLMKFYNSGVSPTDNSRISLSRTSSSMSVGNNKKHFQNQVDFVCVSGSTSPIIEPLFKLVKQEVEKNNLKFGYTILYGSSRSTYAKEHINGVNELFTILHDLTAA</sequence>
<comment type="function">
    <text evidence="4">Regulatory subunit of the trehalose synthase complex that catalyzes the production of trehalose from glucose-6-phosphate and UDP-glucose in a two step process. May stabilize the trehalose synthase complex.</text>
</comment>
<comment type="subunit">
    <text evidence="5">The trehalose synthase complex is composed of the two catalytic subunits TPS1 and TPS2 and at least one of the two regulatory subunits TPS3 or TSL1.</text>
</comment>
<comment type="interaction">
    <interactant intactId="EBI-19448">
        <id>P38426</id>
    </interactant>
    <interactant intactId="EBI-19430">
        <id>Q00764</id>
        <label>TPS1</label>
    </interactant>
    <organismsDiffer>false</organismsDiffer>
    <experiments>6</experiments>
</comment>
<comment type="interaction">
    <interactant intactId="EBI-19448">
        <id>P38426</id>
    </interactant>
    <interactant intactId="EBI-19440">
        <id>P31688</id>
        <label>TPS2</label>
    </interactant>
    <organismsDiffer>false</organismsDiffer>
    <experiments>8</experiments>
</comment>
<comment type="interaction">
    <interactant intactId="EBI-19448">
        <id>P38426</id>
    </interactant>
    <interactant intactId="EBI-19448">
        <id>P38426</id>
        <label>TPS3</label>
    </interactant>
    <organismsDiffer>false</organismsDiffer>
    <experiments>4</experiments>
</comment>
<comment type="interaction">
    <interactant intactId="EBI-19448">
        <id>P38426</id>
    </interactant>
    <interactant intactId="EBI-19638">
        <id>P38427</id>
        <label>TSL1</label>
    </interactant>
    <organismsDiffer>false</organismsDiffer>
    <experiments>3</experiments>
</comment>
<comment type="subcellular location">
    <subcellularLocation>
        <location evidence="2">Cytoplasm</location>
    </subcellularLocation>
</comment>
<comment type="induction">
    <text>Repressed by glucose.</text>
</comment>
<comment type="miscellaneous">
    <text evidence="3">Present with 13500 molecules/cell in log phase SD medium.</text>
</comment>
<comment type="similarity">
    <text evidence="6">In the N-terminal section; belongs to the glycosyltransferase 20 family.</text>
</comment>